<comment type="catalytic activity">
    <reaction>
        <text>pyruvate + ATP = phosphoenolpyruvate + ADP + H(+)</text>
        <dbReference type="Rhea" id="RHEA:18157"/>
        <dbReference type="ChEBI" id="CHEBI:15361"/>
        <dbReference type="ChEBI" id="CHEBI:15378"/>
        <dbReference type="ChEBI" id="CHEBI:30616"/>
        <dbReference type="ChEBI" id="CHEBI:58702"/>
        <dbReference type="ChEBI" id="CHEBI:456216"/>
        <dbReference type="EC" id="2.7.1.40"/>
    </reaction>
</comment>
<comment type="cofactor">
    <cofactor evidence="1">
        <name>Mg(2+)</name>
        <dbReference type="ChEBI" id="CHEBI:18420"/>
    </cofactor>
</comment>
<comment type="cofactor">
    <cofactor evidence="1">
        <name>K(+)</name>
        <dbReference type="ChEBI" id="CHEBI:29103"/>
    </cofactor>
</comment>
<comment type="pathway">
    <text>Carbohydrate degradation; glycolysis; pyruvate from D-glyceraldehyde 3-phosphate: step 5/5.</text>
</comment>
<comment type="subunit">
    <text evidence="1">Homotetramer.</text>
</comment>
<comment type="similarity">
    <text evidence="4">Belongs to the pyruvate kinase family.</text>
</comment>
<protein>
    <recommendedName>
        <fullName>Pyruvate kinase</fullName>
        <shortName>PK</shortName>
        <ecNumber>2.7.1.40</ecNumber>
    </recommendedName>
</protein>
<dbReference type="EC" id="2.7.1.40"/>
<dbReference type="EMBL" id="AY144995">
    <property type="protein sequence ID" value="AAO32558.1"/>
    <property type="molecule type" value="Genomic_DNA"/>
</dbReference>
<dbReference type="SMR" id="Q875S4"/>
<dbReference type="UniPathway" id="UPA00109">
    <property type="reaction ID" value="UER00188"/>
</dbReference>
<dbReference type="GO" id="GO:0005524">
    <property type="term" value="F:ATP binding"/>
    <property type="evidence" value="ECO:0007669"/>
    <property type="project" value="UniProtKB-KW"/>
</dbReference>
<dbReference type="GO" id="GO:0016301">
    <property type="term" value="F:kinase activity"/>
    <property type="evidence" value="ECO:0007669"/>
    <property type="project" value="UniProtKB-KW"/>
</dbReference>
<dbReference type="GO" id="GO:0000287">
    <property type="term" value="F:magnesium ion binding"/>
    <property type="evidence" value="ECO:0007669"/>
    <property type="project" value="InterPro"/>
</dbReference>
<dbReference type="GO" id="GO:0030955">
    <property type="term" value="F:potassium ion binding"/>
    <property type="evidence" value="ECO:0007669"/>
    <property type="project" value="InterPro"/>
</dbReference>
<dbReference type="GO" id="GO:0004743">
    <property type="term" value="F:pyruvate kinase activity"/>
    <property type="evidence" value="ECO:0007669"/>
    <property type="project" value="UniProtKB-EC"/>
</dbReference>
<dbReference type="CDD" id="cd00288">
    <property type="entry name" value="Pyruvate_Kinase"/>
    <property type="match status" value="1"/>
</dbReference>
<dbReference type="FunFam" id="2.40.33.10:FF:000001">
    <property type="entry name" value="Pyruvate kinase"/>
    <property type="match status" value="1"/>
</dbReference>
<dbReference type="FunFam" id="3.20.20.60:FF:000001">
    <property type="entry name" value="Pyruvate kinase"/>
    <property type="match status" value="1"/>
</dbReference>
<dbReference type="FunFam" id="3.40.1380.20:FF:000001">
    <property type="entry name" value="Pyruvate kinase"/>
    <property type="match status" value="1"/>
</dbReference>
<dbReference type="Gene3D" id="3.20.20.60">
    <property type="entry name" value="Phosphoenolpyruvate-binding domains"/>
    <property type="match status" value="1"/>
</dbReference>
<dbReference type="Gene3D" id="2.40.33.10">
    <property type="entry name" value="PK beta-barrel domain-like"/>
    <property type="match status" value="1"/>
</dbReference>
<dbReference type="Gene3D" id="3.40.1380.20">
    <property type="entry name" value="Pyruvate kinase, C-terminal domain"/>
    <property type="match status" value="1"/>
</dbReference>
<dbReference type="InterPro" id="IPR001697">
    <property type="entry name" value="Pyr_Knase"/>
</dbReference>
<dbReference type="InterPro" id="IPR015813">
    <property type="entry name" value="Pyrv/PenolPyrv_kinase-like_dom"/>
</dbReference>
<dbReference type="InterPro" id="IPR040442">
    <property type="entry name" value="Pyrv_kinase-like_dom_sf"/>
</dbReference>
<dbReference type="InterPro" id="IPR011037">
    <property type="entry name" value="Pyrv_Knase-like_insert_dom_sf"/>
</dbReference>
<dbReference type="InterPro" id="IPR018209">
    <property type="entry name" value="Pyrv_Knase_AS"/>
</dbReference>
<dbReference type="InterPro" id="IPR015793">
    <property type="entry name" value="Pyrv_Knase_brl"/>
</dbReference>
<dbReference type="InterPro" id="IPR015795">
    <property type="entry name" value="Pyrv_Knase_C"/>
</dbReference>
<dbReference type="InterPro" id="IPR036918">
    <property type="entry name" value="Pyrv_Knase_C_sf"/>
</dbReference>
<dbReference type="InterPro" id="IPR015806">
    <property type="entry name" value="Pyrv_Knase_insert_dom_sf"/>
</dbReference>
<dbReference type="NCBIfam" id="NF004491">
    <property type="entry name" value="PRK05826.1"/>
    <property type="match status" value="1"/>
</dbReference>
<dbReference type="NCBIfam" id="NF004978">
    <property type="entry name" value="PRK06354.1"/>
    <property type="match status" value="1"/>
</dbReference>
<dbReference type="NCBIfam" id="TIGR01064">
    <property type="entry name" value="pyruv_kin"/>
    <property type="match status" value="1"/>
</dbReference>
<dbReference type="PANTHER" id="PTHR11817">
    <property type="entry name" value="PYRUVATE KINASE"/>
    <property type="match status" value="1"/>
</dbReference>
<dbReference type="Pfam" id="PF00224">
    <property type="entry name" value="PK"/>
    <property type="match status" value="1"/>
</dbReference>
<dbReference type="Pfam" id="PF02887">
    <property type="entry name" value="PK_C"/>
    <property type="match status" value="1"/>
</dbReference>
<dbReference type="PRINTS" id="PR01050">
    <property type="entry name" value="PYRUVTKNASE"/>
</dbReference>
<dbReference type="SUPFAM" id="SSF51621">
    <property type="entry name" value="Phosphoenolpyruvate/pyruvate domain"/>
    <property type="match status" value="1"/>
</dbReference>
<dbReference type="SUPFAM" id="SSF50800">
    <property type="entry name" value="PK beta-barrel domain-like"/>
    <property type="match status" value="1"/>
</dbReference>
<dbReference type="SUPFAM" id="SSF52935">
    <property type="entry name" value="PK C-terminal domain-like"/>
    <property type="match status" value="1"/>
</dbReference>
<dbReference type="PROSITE" id="PS00110">
    <property type="entry name" value="PYRUVATE_KINASE"/>
    <property type="match status" value="1"/>
</dbReference>
<gene>
    <name type="primary">PYK1</name>
    <name type="synonym">CDC19</name>
</gene>
<name>KPYK_LACK1</name>
<sequence length="501" mass="54895">MESRLGWLTELQTETGANLRRTSIIGTIGPKTNNPETLVALRKAGLNIVRMNFSHGSYEYHQSVIDNARKSEELYPGRPLAIALDTKGPEIRTGTTTNEVDYPIPPNHEMIFSIDDKYAKACDDKVMYIDYKNITKVIEKGKIIYVDDGVLSFEVLEVVDEQTLKVKSLNAGKICSHKGVNLPGTDVDLPALSEKDKSDLRFGVKNGVHMVFASFIRTAQDVLTIREVLGEDGKDVKIIVKIENQQGVNNFDEILKVTDGVMVARGDLGIEIPAPQVFAVQKKLIAKCNLAGKPVICATQMLESMTYNPRPTRAEVSDVGNAVLDGADCVMLSGETAKGNYPINAVTIMAETALIAEQAIPYVATYDDLRNFTPKPTSTTETIAAAAVSSVFEQKAKAIIVLSTTGDTPRLVSKYKPNVPIVMVTRNPRAARFSHLYRGVFPFVYESDTESEWTKDVESRLNFGIAKAKEFGMLKEGDTIVTIQGFAAGVGHSNTLRVLTV</sequence>
<keyword id="KW-0067">ATP-binding</keyword>
<keyword id="KW-0324">Glycolysis</keyword>
<keyword id="KW-0418">Kinase</keyword>
<keyword id="KW-0460">Magnesium</keyword>
<keyword id="KW-0479">Metal-binding</keyword>
<keyword id="KW-0547">Nucleotide-binding</keyword>
<keyword id="KW-0630">Potassium</keyword>
<keyword id="KW-0670">Pyruvate</keyword>
<keyword id="KW-0808">Transferase</keyword>
<proteinExistence type="inferred from homology"/>
<evidence type="ECO:0000250" key="1"/>
<evidence type="ECO:0000250" key="2">
    <source>
        <dbReference type="UniProtKB" id="P14618"/>
    </source>
</evidence>
<evidence type="ECO:0000255" key="3"/>
<evidence type="ECO:0000305" key="4"/>
<accession>Q875S4</accession>
<feature type="chain" id="PRO_0000112117" description="Pyruvate kinase">
    <location>
        <begin position="1"/>
        <end position="501"/>
    </location>
</feature>
<feature type="binding site" evidence="1">
    <location>
        <position position="50"/>
    </location>
    <ligand>
        <name>substrate</name>
    </ligand>
</feature>
<feature type="binding site" evidence="2">
    <location>
        <begin position="52"/>
        <end position="55"/>
    </location>
    <ligand>
        <name>ATP</name>
        <dbReference type="ChEBI" id="CHEBI:30616"/>
    </ligand>
</feature>
<feature type="binding site" evidence="1">
    <location>
        <position position="52"/>
    </location>
    <ligand>
        <name>K(+)</name>
        <dbReference type="ChEBI" id="CHEBI:29103"/>
    </ligand>
</feature>
<feature type="binding site" evidence="1">
    <location>
        <position position="54"/>
    </location>
    <ligand>
        <name>K(+)</name>
        <dbReference type="ChEBI" id="CHEBI:29103"/>
    </ligand>
</feature>
<feature type="binding site" evidence="1">
    <location>
        <position position="85"/>
    </location>
    <ligand>
        <name>K(+)</name>
        <dbReference type="ChEBI" id="CHEBI:29103"/>
    </ligand>
</feature>
<feature type="binding site" evidence="1">
    <location>
        <position position="86"/>
    </location>
    <ligand>
        <name>K(+)</name>
        <dbReference type="ChEBI" id="CHEBI:29103"/>
    </ligand>
</feature>
<feature type="binding site" evidence="2">
    <location>
        <position position="92"/>
    </location>
    <ligand>
        <name>ATP</name>
        <dbReference type="ChEBI" id="CHEBI:30616"/>
    </ligand>
</feature>
<feature type="binding site" evidence="2">
    <location>
        <position position="178"/>
    </location>
    <ligand>
        <name>ATP</name>
        <dbReference type="ChEBI" id="CHEBI:30616"/>
    </ligand>
</feature>
<feature type="binding site" evidence="3">
    <location>
        <position position="243"/>
    </location>
    <ligand>
        <name>Mg(2+)</name>
        <dbReference type="ChEBI" id="CHEBI:18420"/>
    </ligand>
</feature>
<feature type="binding site" evidence="1">
    <location>
        <position position="266"/>
    </location>
    <ligand>
        <name>substrate</name>
    </ligand>
</feature>
<feature type="binding site" evidence="1">
    <location>
        <position position="267"/>
    </location>
    <ligand>
        <name>Mg(2+)</name>
        <dbReference type="ChEBI" id="CHEBI:18420"/>
    </ligand>
</feature>
<feature type="binding site" evidence="1">
    <location>
        <position position="267"/>
    </location>
    <ligand>
        <name>substrate</name>
    </ligand>
</feature>
<feature type="binding site" evidence="1">
    <location>
        <position position="299"/>
    </location>
    <ligand>
        <name>substrate</name>
    </ligand>
</feature>
<feature type="site" description="Transition state stabilizer" evidence="1">
    <location>
        <position position="241"/>
    </location>
</feature>
<reference key="1">
    <citation type="journal article" date="2003" name="Nature">
        <title>Yeast genome duplication was followed by asynchronous differentiation of duplicated genes.</title>
        <authorList>
            <person name="Langkjaer R.B."/>
            <person name="Cliften P.F."/>
            <person name="Johnston M."/>
            <person name="Piskur J."/>
        </authorList>
    </citation>
    <scope>NUCLEOTIDE SEQUENCE [GENOMIC DNA]</scope>
    <source>
        <strain>ATCC 58438 / CBS 3082 / BCRC 21498 / NBRC 1685 / JCM 7257 / NCYC 543 / NRRL Y-12651</strain>
    </source>
</reference>
<organism>
    <name type="scientific">Lachancea kluyveri (strain ATCC 58438 / CBS 3082 / BCRC 21498 / NBRC 1685 / JCM 7257 / NCYC 543 / NRRL Y-12651)</name>
    <name type="common">Yeast</name>
    <name type="synonym">Saccharomyces kluyveri</name>
    <dbReference type="NCBI Taxonomy" id="226302"/>
    <lineage>
        <taxon>Eukaryota</taxon>
        <taxon>Fungi</taxon>
        <taxon>Dikarya</taxon>
        <taxon>Ascomycota</taxon>
        <taxon>Saccharomycotina</taxon>
        <taxon>Saccharomycetes</taxon>
        <taxon>Saccharomycetales</taxon>
        <taxon>Saccharomycetaceae</taxon>
        <taxon>Lachancea</taxon>
    </lineage>
</organism>